<feature type="chain" id="PRO_0000089236" description="Uncharacterized protein Saci_1252">
    <location>
        <begin position="1"/>
        <end position="181"/>
    </location>
</feature>
<feature type="domain" description="Macro" evidence="1">
    <location>
        <begin position="1"/>
        <end position="178"/>
    </location>
</feature>
<proteinExistence type="predicted"/>
<organism>
    <name type="scientific">Sulfolobus acidocaldarius (strain ATCC 33909 / DSM 639 / JCM 8929 / NBRC 15157 / NCIMB 11770)</name>
    <dbReference type="NCBI Taxonomy" id="330779"/>
    <lineage>
        <taxon>Archaea</taxon>
        <taxon>Thermoproteota</taxon>
        <taxon>Thermoprotei</taxon>
        <taxon>Sulfolobales</taxon>
        <taxon>Sulfolobaceae</taxon>
        <taxon>Sulfolobus</taxon>
    </lineage>
</organism>
<dbReference type="EMBL" id="CP000077">
    <property type="protein sequence ID" value="AAY80598.1"/>
    <property type="molecule type" value="Genomic_DNA"/>
</dbReference>
<dbReference type="RefSeq" id="WP_011278100.1">
    <property type="nucleotide sequence ID" value="NC_007181.1"/>
</dbReference>
<dbReference type="SMR" id="Q4J9D2"/>
<dbReference type="STRING" id="330779.Saci_1252"/>
<dbReference type="GeneID" id="14551756"/>
<dbReference type="KEGG" id="sai:Saci_1252"/>
<dbReference type="PATRIC" id="fig|330779.12.peg.1213"/>
<dbReference type="eggNOG" id="arCOG04225">
    <property type="taxonomic scope" value="Archaea"/>
</dbReference>
<dbReference type="HOGENOM" id="CLU_046550_7_0_2"/>
<dbReference type="Proteomes" id="UP000001018">
    <property type="component" value="Chromosome"/>
</dbReference>
<dbReference type="CDD" id="cd02907">
    <property type="entry name" value="Macro_Af1521_BAL-like"/>
    <property type="match status" value="1"/>
</dbReference>
<dbReference type="Gene3D" id="3.40.220.10">
    <property type="entry name" value="Leucine Aminopeptidase, subunit E, domain 1"/>
    <property type="match status" value="1"/>
</dbReference>
<dbReference type="InterPro" id="IPR002589">
    <property type="entry name" value="Macro_dom"/>
</dbReference>
<dbReference type="InterPro" id="IPR043472">
    <property type="entry name" value="Macro_dom-like"/>
</dbReference>
<dbReference type="NCBIfam" id="NF001667">
    <property type="entry name" value="PRK00431.2-3"/>
    <property type="match status" value="1"/>
</dbReference>
<dbReference type="NCBIfam" id="NF001668">
    <property type="entry name" value="PRK00431.2-4"/>
    <property type="match status" value="1"/>
</dbReference>
<dbReference type="PANTHER" id="PTHR11106">
    <property type="entry name" value="GANGLIOSIDE INDUCED DIFFERENTIATION ASSOCIATED PROTEIN 2-RELATED"/>
    <property type="match status" value="1"/>
</dbReference>
<dbReference type="PANTHER" id="PTHR11106:SF111">
    <property type="entry name" value="MACRO DOMAIN-CONTAINING PROTEIN"/>
    <property type="match status" value="1"/>
</dbReference>
<dbReference type="Pfam" id="PF01661">
    <property type="entry name" value="Macro"/>
    <property type="match status" value="1"/>
</dbReference>
<dbReference type="SMART" id="SM00506">
    <property type="entry name" value="A1pp"/>
    <property type="match status" value="1"/>
</dbReference>
<dbReference type="SUPFAM" id="SSF52949">
    <property type="entry name" value="Macro domain-like"/>
    <property type="match status" value="1"/>
</dbReference>
<dbReference type="PROSITE" id="PS51154">
    <property type="entry name" value="MACRO"/>
    <property type="match status" value="1"/>
</dbReference>
<gene>
    <name type="ordered locus">Saci_1252</name>
</gene>
<accession>Q4J9D2</accession>
<evidence type="ECO:0000255" key="1">
    <source>
        <dbReference type="PROSITE-ProRule" id="PRU00490"/>
    </source>
</evidence>
<name>Y1252_SULAC</name>
<reference key="1">
    <citation type="journal article" date="2005" name="J. Bacteriol.">
        <title>The genome of Sulfolobus acidocaldarius, a model organism of the Crenarchaeota.</title>
        <authorList>
            <person name="Chen L."/>
            <person name="Bruegger K."/>
            <person name="Skovgaard M."/>
            <person name="Redder P."/>
            <person name="She Q."/>
            <person name="Torarinsson E."/>
            <person name="Greve B."/>
            <person name="Awayez M."/>
            <person name="Zibat A."/>
            <person name="Klenk H.-P."/>
            <person name="Garrett R.A."/>
        </authorList>
    </citation>
    <scope>NUCLEOTIDE SEQUENCE [LARGE SCALE GENOMIC DNA]</scope>
    <source>
        <strain>ATCC 33909 / DSM 639 / JCM 8929 / NBRC 15157 / NCIMB 11770</strain>
    </source>
</reference>
<keyword id="KW-1185">Reference proteome</keyword>
<sequence>MVVAYKLSNGLEVILENGDITKVEADAIVNAANSYLSHGGGVALAIVRSGGYIIQEESDEYVRRNGPVPVGEVAVTTAGKLKARYVIHAVGPRYGIEGDDKLESAIRRSLEKADELKLSSIALPAISTGIYGYPYEICARIMSKVMKEYKPKFLKRILVVVYGDQAYSVFKKVFDNSLYMN</sequence>
<protein>
    <recommendedName>
        <fullName>Uncharacterized protein Saci_1252</fullName>
    </recommendedName>
</protein>